<reference key="1">
    <citation type="journal article" date="1996" name="Gene">
        <title>Drosophila melanogaster contains both X-linked and autosomal homologues of the gene encoding calcineurin B.</title>
        <authorList>
            <person name="Warren W.D."/>
            <person name="Phillips A.M."/>
            <person name="Howells A.J."/>
        </authorList>
    </citation>
    <scope>NUCLEOTIDE SEQUENCE [GENOMIC DNA]</scope>
    <source>
        <strain>Canton-S</strain>
    </source>
</reference>
<reference key="2">
    <citation type="journal article" date="2001" name="Genetics">
        <title>Molecular nature of 11 spontaneous de novo mutations in Drosophila melanogaster.</title>
        <authorList>
            <person name="Yang H.P."/>
            <person name="Tanikawa A.Y."/>
            <person name="Kondrashov A.S."/>
        </authorList>
    </citation>
    <scope>NUCLEOTIDE SEQUENCE [GENOMIC DNA]</scope>
</reference>
<reference key="3">
    <citation type="journal article" date="2000" name="Science">
        <title>The genome sequence of Drosophila melanogaster.</title>
        <authorList>
            <person name="Adams M.D."/>
            <person name="Celniker S.E."/>
            <person name="Holt R.A."/>
            <person name="Evans C.A."/>
            <person name="Gocayne J.D."/>
            <person name="Amanatides P.G."/>
            <person name="Scherer S.E."/>
            <person name="Li P.W."/>
            <person name="Hoskins R.A."/>
            <person name="Galle R.F."/>
            <person name="George R.A."/>
            <person name="Lewis S.E."/>
            <person name="Richards S."/>
            <person name="Ashburner M."/>
            <person name="Henderson S.N."/>
            <person name="Sutton G.G."/>
            <person name="Wortman J.R."/>
            <person name="Yandell M.D."/>
            <person name="Zhang Q."/>
            <person name="Chen L.X."/>
            <person name="Brandon R.C."/>
            <person name="Rogers Y.-H.C."/>
            <person name="Blazej R.G."/>
            <person name="Champe M."/>
            <person name="Pfeiffer B.D."/>
            <person name="Wan K.H."/>
            <person name="Doyle C."/>
            <person name="Baxter E.G."/>
            <person name="Helt G."/>
            <person name="Nelson C.R."/>
            <person name="Miklos G.L.G."/>
            <person name="Abril J.F."/>
            <person name="Agbayani A."/>
            <person name="An H.-J."/>
            <person name="Andrews-Pfannkoch C."/>
            <person name="Baldwin D."/>
            <person name="Ballew R.M."/>
            <person name="Basu A."/>
            <person name="Baxendale J."/>
            <person name="Bayraktaroglu L."/>
            <person name="Beasley E.M."/>
            <person name="Beeson K.Y."/>
            <person name="Benos P.V."/>
            <person name="Berman B.P."/>
            <person name="Bhandari D."/>
            <person name="Bolshakov S."/>
            <person name="Borkova D."/>
            <person name="Botchan M.R."/>
            <person name="Bouck J."/>
            <person name="Brokstein P."/>
            <person name="Brottier P."/>
            <person name="Burtis K.C."/>
            <person name="Busam D.A."/>
            <person name="Butler H."/>
            <person name="Cadieu E."/>
            <person name="Center A."/>
            <person name="Chandra I."/>
            <person name="Cherry J.M."/>
            <person name="Cawley S."/>
            <person name="Dahlke C."/>
            <person name="Davenport L.B."/>
            <person name="Davies P."/>
            <person name="de Pablos B."/>
            <person name="Delcher A."/>
            <person name="Deng Z."/>
            <person name="Mays A.D."/>
            <person name="Dew I."/>
            <person name="Dietz S.M."/>
            <person name="Dodson K."/>
            <person name="Doup L.E."/>
            <person name="Downes M."/>
            <person name="Dugan-Rocha S."/>
            <person name="Dunkov B.C."/>
            <person name="Dunn P."/>
            <person name="Durbin K.J."/>
            <person name="Evangelista C.C."/>
            <person name="Ferraz C."/>
            <person name="Ferriera S."/>
            <person name="Fleischmann W."/>
            <person name="Fosler C."/>
            <person name="Gabrielian A.E."/>
            <person name="Garg N.S."/>
            <person name="Gelbart W.M."/>
            <person name="Glasser K."/>
            <person name="Glodek A."/>
            <person name="Gong F."/>
            <person name="Gorrell J.H."/>
            <person name="Gu Z."/>
            <person name="Guan P."/>
            <person name="Harris M."/>
            <person name="Harris N.L."/>
            <person name="Harvey D.A."/>
            <person name="Heiman T.J."/>
            <person name="Hernandez J.R."/>
            <person name="Houck J."/>
            <person name="Hostin D."/>
            <person name="Houston K.A."/>
            <person name="Howland T.J."/>
            <person name="Wei M.-H."/>
            <person name="Ibegwam C."/>
            <person name="Jalali M."/>
            <person name="Kalush F."/>
            <person name="Karpen G.H."/>
            <person name="Ke Z."/>
            <person name="Kennison J.A."/>
            <person name="Ketchum K.A."/>
            <person name="Kimmel B.E."/>
            <person name="Kodira C.D."/>
            <person name="Kraft C.L."/>
            <person name="Kravitz S."/>
            <person name="Kulp D."/>
            <person name="Lai Z."/>
            <person name="Lasko P."/>
            <person name="Lei Y."/>
            <person name="Levitsky A.A."/>
            <person name="Li J.H."/>
            <person name="Li Z."/>
            <person name="Liang Y."/>
            <person name="Lin X."/>
            <person name="Liu X."/>
            <person name="Mattei B."/>
            <person name="McIntosh T.C."/>
            <person name="McLeod M.P."/>
            <person name="McPherson D."/>
            <person name="Merkulov G."/>
            <person name="Milshina N.V."/>
            <person name="Mobarry C."/>
            <person name="Morris J."/>
            <person name="Moshrefi A."/>
            <person name="Mount S.M."/>
            <person name="Moy M."/>
            <person name="Murphy B."/>
            <person name="Murphy L."/>
            <person name="Muzny D.M."/>
            <person name="Nelson D.L."/>
            <person name="Nelson D.R."/>
            <person name="Nelson K.A."/>
            <person name="Nixon K."/>
            <person name="Nusskern D.R."/>
            <person name="Pacleb J.M."/>
            <person name="Palazzolo M."/>
            <person name="Pittman G.S."/>
            <person name="Pan S."/>
            <person name="Pollard J."/>
            <person name="Puri V."/>
            <person name="Reese M.G."/>
            <person name="Reinert K."/>
            <person name="Remington K."/>
            <person name="Saunders R.D.C."/>
            <person name="Scheeler F."/>
            <person name="Shen H."/>
            <person name="Shue B.C."/>
            <person name="Siden-Kiamos I."/>
            <person name="Simpson M."/>
            <person name="Skupski M.P."/>
            <person name="Smith T.J."/>
            <person name="Spier E."/>
            <person name="Spradling A.C."/>
            <person name="Stapleton M."/>
            <person name="Strong R."/>
            <person name="Sun E."/>
            <person name="Svirskas R."/>
            <person name="Tector C."/>
            <person name="Turner R."/>
            <person name="Venter E."/>
            <person name="Wang A.H."/>
            <person name="Wang X."/>
            <person name="Wang Z.-Y."/>
            <person name="Wassarman D.A."/>
            <person name="Weinstock G.M."/>
            <person name="Weissenbach J."/>
            <person name="Williams S.M."/>
            <person name="Woodage T."/>
            <person name="Worley K.C."/>
            <person name="Wu D."/>
            <person name="Yang S."/>
            <person name="Yao Q.A."/>
            <person name="Ye J."/>
            <person name="Yeh R.-F."/>
            <person name="Zaveri J.S."/>
            <person name="Zhan M."/>
            <person name="Zhang G."/>
            <person name="Zhao Q."/>
            <person name="Zheng L."/>
            <person name="Zheng X.H."/>
            <person name="Zhong F.N."/>
            <person name="Zhong W."/>
            <person name="Zhou X."/>
            <person name="Zhu S.C."/>
            <person name="Zhu X."/>
            <person name="Smith H.O."/>
            <person name="Gibbs R.A."/>
            <person name="Myers E.W."/>
            <person name="Rubin G.M."/>
            <person name="Venter J.C."/>
        </authorList>
    </citation>
    <scope>NUCLEOTIDE SEQUENCE [LARGE SCALE GENOMIC DNA]</scope>
    <source>
        <strain>Berkeley</strain>
    </source>
</reference>
<reference key="4">
    <citation type="journal article" date="2002" name="Genome Biol.">
        <title>Annotation of the Drosophila melanogaster euchromatic genome: a systematic review.</title>
        <authorList>
            <person name="Misra S."/>
            <person name="Crosby M.A."/>
            <person name="Mungall C.J."/>
            <person name="Matthews B.B."/>
            <person name="Campbell K.S."/>
            <person name="Hradecky P."/>
            <person name="Huang Y."/>
            <person name="Kaminker J.S."/>
            <person name="Millburn G.H."/>
            <person name="Prochnik S.E."/>
            <person name="Smith C.D."/>
            <person name="Tupy J.L."/>
            <person name="Whitfield E.J."/>
            <person name="Bayraktaroglu L."/>
            <person name="Berman B.P."/>
            <person name="Bettencourt B.R."/>
            <person name="Celniker S.E."/>
            <person name="de Grey A.D.N.J."/>
            <person name="Drysdale R.A."/>
            <person name="Harris N.L."/>
            <person name="Richter J."/>
            <person name="Russo S."/>
            <person name="Schroeder A.J."/>
            <person name="Shu S.Q."/>
            <person name="Stapleton M."/>
            <person name="Yamada C."/>
            <person name="Ashburner M."/>
            <person name="Gelbart W.M."/>
            <person name="Rubin G.M."/>
            <person name="Lewis S.E."/>
        </authorList>
    </citation>
    <scope>GENOME REANNOTATION</scope>
    <source>
        <strain>Berkeley</strain>
    </source>
</reference>
<reference key="5">
    <citation type="journal article" date="2002" name="Genome Biol.">
        <title>A Drosophila full-length cDNA resource.</title>
        <authorList>
            <person name="Stapleton M."/>
            <person name="Carlson J.W."/>
            <person name="Brokstein P."/>
            <person name="Yu C."/>
            <person name="Champe M."/>
            <person name="George R.A."/>
            <person name="Guarin H."/>
            <person name="Kronmiller B."/>
            <person name="Pacleb J.M."/>
            <person name="Park S."/>
            <person name="Wan K.H."/>
            <person name="Rubin G.M."/>
            <person name="Celniker S.E."/>
        </authorList>
    </citation>
    <scope>NUCLEOTIDE SEQUENCE [LARGE SCALE MRNA] OF 1-398</scope>
    <source>
        <strain>Berkeley</strain>
        <tissue>Embryo</tissue>
    </source>
</reference>
<sequence>MSPGIVSQEVNGRQEPTEAARDERHGRRRRVAVIGAGLVGSLAALNFARMGNHVDLYEYREDIRQALVVQGRSINLALSQRGRKALAAVGLEQEVLATAIPMRGRMLHDVRGNSSVVLYDPINNQCLYSVGRRQLNEVLLNACDKLPNIRCHFEHKLTSANLREGSMEFRNPAKEAVAAHADLIVGCDGAFSSVRQNNVRLPGFNYSQEYIETGYLELCIPSKSGDFQMPANYLHIWPRNTFMMIALPNQDKSFTVTLSMPFEIFAGIQNQNDLLEFFKLNFRDALPLIGEQQLIKDFFKTRPQFLVSIKCRPYHYADKALILGDAAHAMVPYYGQGMNAGMEDVTLLTDILAKQLPLDETLALFTESRWQDAFAICDLAMYNYVEMRDLTKRWTFRLRKWLDTLLFRLFPGWIPLYNSVSFSSMPYRQCIANRKWQDQLLKRIFGATFLAAIVTGGAIYAQRFL</sequence>
<dbReference type="EC" id="1.14.13.9" evidence="1"/>
<dbReference type="EMBL" id="U56245">
    <property type="protein sequence ID" value="AAC47351.1"/>
    <property type="status" value="ALT_INIT"/>
    <property type="molecule type" value="Genomic_DNA"/>
</dbReference>
<dbReference type="EMBL" id="AF317319">
    <property type="protein sequence ID" value="AAK07882.1"/>
    <property type="status" value="ALT_INIT"/>
    <property type="molecule type" value="Genomic_DNA"/>
</dbReference>
<dbReference type="EMBL" id="AE013599">
    <property type="protein sequence ID" value="AAF59196.4"/>
    <property type="molecule type" value="Genomic_DNA"/>
</dbReference>
<dbReference type="EMBL" id="AY071296">
    <property type="protein sequence ID" value="AAL48918.1"/>
    <property type="status" value="ALT_SEQ"/>
    <property type="molecule type" value="mRNA"/>
</dbReference>
<dbReference type="RefSeq" id="NP_523651.4">
    <property type="nucleotide sequence ID" value="NM_078927.3"/>
</dbReference>
<dbReference type="SMR" id="A1Z746"/>
<dbReference type="BioGRID" id="61593">
    <property type="interactions" value="1"/>
</dbReference>
<dbReference type="FunCoup" id="A1Z746">
    <property type="interactions" value="239"/>
</dbReference>
<dbReference type="STRING" id="7227.FBpp0311059"/>
<dbReference type="PaxDb" id="7227-FBpp0088005"/>
<dbReference type="EnsemblMetazoa" id="FBtr0344723">
    <property type="protein sequence ID" value="FBpp0311059"/>
    <property type="gene ID" value="FBgn0000337"/>
</dbReference>
<dbReference type="GeneID" id="35724"/>
<dbReference type="KEGG" id="dme:Dmel_CG1555"/>
<dbReference type="UCSC" id="CG1555-RA">
    <property type="organism name" value="d. melanogaster"/>
</dbReference>
<dbReference type="AGR" id="FB:FBgn0000337"/>
<dbReference type="CTD" id="35724"/>
<dbReference type="FlyBase" id="FBgn0000337">
    <property type="gene designation" value="cn"/>
</dbReference>
<dbReference type="VEuPathDB" id="VectorBase:FBgn0000337"/>
<dbReference type="eggNOG" id="KOG2614">
    <property type="taxonomic scope" value="Eukaryota"/>
</dbReference>
<dbReference type="InParanoid" id="A1Z746"/>
<dbReference type="OMA" id="REFMFIA"/>
<dbReference type="OrthoDB" id="10053569at2759"/>
<dbReference type="PhylomeDB" id="A1Z746"/>
<dbReference type="Reactome" id="R-DME-71240">
    <property type="pathway name" value="Tryptophan catabolism"/>
</dbReference>
<dbReference type="UniPathway" id="UPA00253">
    <property type="reaction ID" value="UER00328"/>
</dbReference>
<dbReference type="BioGRID-ORCS" id="35724">
    <property type="hits" value="0 hits in 1 CRISPR screen"/>
</dbReference>
<dbReference type="GenomeRNAi" id="35724"/>
<dbReference type="PRO" id="PR:A1Z746"/>
<dbReference type="Proteomes" id="UP000000803">
    <property type="component" value="Chromosome 2R"/>
</dbReference>
<dbReference type="Bgee" id="FBgn0000337">
    <property type="expression patterns" value="Expressed in adult eye primordium (Drosophila) and 7 other cell types or tissues"/>
</dbReference>
<dbReference type="GO" id="GO:0005741">
    <property type="term" value="C:mitochondrial outer membrane"/>
    <property type="evidence" value="ECO:0000250"/>
    <property type="project" value="UniProtKB"/>
</dbReference>
<dbReference type="GO" id="GO:0071949">
    <property type="term" value="F:FAD binding"/>
    <property type="evidence" value="ECO:0007669"/>
    <property type="project" value="InterPro"/>
</dbReference>
<dbReference type="GO" id="GO:0004502">
    <property type="term" value="F:kynurenine 3-monooxygenase activity"/>
    <property type="evidence" value="ECO:0000250"/>
    <property type="project" value="UniProtKB"/>
</dbReference>
<dbReference type="GO" id="GO:0034354">
    <property type="term" value="P:'de novo' NAD biosynthetic process from L-tryptophan"/>
    <property type="evidence" value="ECO:0007669"/>
    <property type="project" value="UniProtKB-UniRule"/>
</dbReference>
<dbReference type="GO" id="GO:0043420">
    <property type="term" value="P:anthranilate metabolic process"/>
    <property type="evidence" value="ECO:0007669"/>
    <property type="project" value="UniProtKB-UniRule"/>
</dbReference>
<dbReference type="GO" id="GO:0048072">
    <property type="term" value="P:compound eye pigmentation"/>
    <property type="evidence" value="ECO:0000304"/>
    <property type="project" value="FlyBase"/>
</dbReference>
<dbReference type="GO" id="GO:0070189">
    <property type="term" value="P:kynurenine metabolic process"/>
    <property type="evidence" value="ECO:0000315"/>
    <property type="project" value="UniProtKB"/>
</dbReference>
<dbReference type="GO" id="GO:0006569">
    <property type="term" value="P:L-tryptophan catabolic process"/>
    <property type="evidence" value="ECO:0000304"/>
    <property type="project" value="FlyBase"/>
</dbReference>
<dbReference type="GO" id="GO:0019674">
    <property type="term" value="P:NAD metabolic process"/>
    <property type="evidence" value="ECO:0000250"/>
    <property type="project" value="UniProtKB"/>
</dbReference>
<dbReference type="GO" id="GO:0019805">
    <property type="term" value="P:quinolinate biosynthetic process"/>
    <property type="evidence" value="ECO:0007669"/>
    <property type="project" value="UniProtKB-UniRule"/>
</dbReference>
<dbReference type="FunFam" id="3.50.50.60:FF:000129">
    <property type="entry name" value="Kynurenine 3-monooxygenase"/>
    <property type="match status" value="1"/>
</dbReference>
<dbReference type="Gene3D" id="3.50.50.60">
    <property type="entry name" value="FAD/NAD(P)-binding domain"/>
    <property type="match status" value="1"/>
</dbReference>
<dbReference type="HAMAP" id="MF_01971">
    <property type="entry name" value="Kynurenine_monooxygenase"/>
    <property type="match status" value="1"/>
</dbReference>
<dbReference type="InterPro" id="IPR002938">
    <property type="entry name" value="FAD-bd"/>
</dbReference>
<dbReference type="InterPro" id="IPR036188">
    <property type="entry name" value="FAD/NAD-bd_sf"/>
</dbReference>
<dbReference type="InterPro" id="IPR027545">
    <property type="entry name" value="Kynurenine_monooxygenase"/>
</dbReference>
<dbReference type="PANTHER" id="PTHR46028">
    <property type="entry name" value="KYNURENINE 3-MONOOXYGENASE"/>
    <property type="match status" value="1"/>
</dbReference>
<dbReference type="PANTHER" id="PTHR46028:SF2">
    <property type="entry name" value="KYNURENINE 3-MONOOXYGENASE"/>
    <property type="match status" value="1"/>
</dbReference>
<dbReference type="Pfam" id="PF01494">
    <property type="entry name" value="FAD_binding_3"/>
    <property type="match status" value="1"/>
</dbReference>
<dbReference type="PRINTS" id="PR00420">
    <property type="entry name" value="RNGMNOXGNASE"/>
</dbReference>
<dbReference type="SUPFAM" id="SSF51905">
    <property type="entry name" value="FAD/NAD(P)-binding domain"/>
    <property type="match status" value="1"/>
</dbReference>
<evidence type="ECO:0000255" key="1">
    <source>
        <dbReference type="HAMAP-Rule" id="MF_03018"/>
    </source>
</evidence>
<evidence type="ECO:0000256" key="2">
    <source>
        <dbReference type="SAM" id="MobiDB-lite"/>
    </source>
</evidence>
<evidence type="ECO:0000305" key="3"/>
<feature type="chain" id="PRO_0000361914" description="Kynurenine 3-monooxygenase">
    <location>
        <begin position="1"/>
        <end position="465"/>
    </location>
</feature>
<feature type="transmembrane region" description="Helical" evidence="1">
    <location>
        <begin position="405"/>
        <end position="427"/>
    </location>
</feature>
<feature type="transmembrane region" description="Helical" evidence="1">
    <location>
        <begin position="440"/>
        <end position="462"/>
    </location>
</feature>
<feature type="region of interest" description="Disordered" evidence="2">
    <location>
        <begin position="1"/>
        <end position="26"/>
    </location>
</feature>
<feature type="compositionally biased region" description="Basic and acidic residues" evidence="2">
    <location>
        <begin position="15"/>
        <end position="25"/>
    </location>
</feature>
<feature type="sequence conflict" description="In Ref. 2; AAK07882." evidence="3" ref="2">
    <original>R</original>
    <variation>M</variation>
    <location>
        <position position="21"/>
    </location>
</feature>
<feature type="sequence conflict" description="In Ref. 2; AAK07882 and 5; AAL48918." evidence="3" ref="2 5">
    <original>Q</original>
    <variation>E</variation>
    <location>
        <position position="65"/>
    </location>
</feature>
<feature type="sequence conflict" description="In Ref. 2; AAK07882." evidence="3" ref="2">
    <original>Q</original>
    <variation>H</variation>
    <location>
        <position position="70"/>
    </location>
</feature>
<feature type="sequence conflict" description="In Ref. 2; AAK07882." evidence="3" ref="2">
    <original>V</original>
    <variation>E</variation>
    <location>
        <position position="138"/>
    </location>
</feature>
<feature type="sequence conflict" description="In Ref. 5; AAL48918." evidence="3" ref="5">
    <original>NN</original>
    <variation>HL</variation>
    <location>
        <begin position="197"/>
        <end position="198"/>
    </location>
</feature>
<feature type="sequence conflict" description="In Ref. 2; AAK07882." evidence="3" ref="2">
    <original>A</original>
    <variation>P</variation>
    <location>
        <position position="380"/>
    </location>
</feature>
<accession>A1Z746</accession>
<accession>Q27577</accession>
<accession>Q8SYV3</accession>
<accession>Q9BMM9</accession>
<comment type="function">
    <text evidence="1">Catalyzes the hydroxylation of L-kynurenine (L-Kyn) to form 3-hydroxy-L-kynurenine (L-3OHKyn). Required for synthesis of quinolinic acid.</text>
</comment>
<comment type="catalytic activity">
    <reaction evidence="1">
        <text>L-kynurenine + NADPH + O2 + H(+) = 3-hydroxy-L-kynurenine + NADP(+) + H2O</text>
        <dbReference type="Rhea" id="RHEA:20545"/>
        <dbReference type="ChEBI" id="CHEBI:15377"/>
        <dbReference type="ChEBI" id="CHEBI:15378"/>
        <dbReference type="ChEBI" id="CHEBI:15379"/>
        <dbReference type="ChEBI" id="CHEBI:57783"/>
        <dbReference type="ChEBI" id="CHEBI:57959"/>
        <dbReference type="ChEBI" id="CHEBI:58125"/>
        <dbReference type="ChEBI" id="CHEBI:58349"/>
        <dbReference type="EC" id="1.14.13.9"/>
    </reaction>
</comment>
<comment type="cofactor">
    <cofactor evidence="1">
        <name>FAD</name>
        <dbReference type="ChEBI" id="CHEBI:57692"/>
    </cofactor>
</comment>
<comment type="pathway">
    <text evidence="1">Cofactor biosynthesis; NAD(+) biosynthesis; quinolinate from L-kynurenine: step 1/3.</text>
</comment>
<comment type="subcellular location">
    <subcellularLocation>
        <location evidence="1">Mitochondrion</location>
    </subcellularLocation>
    <subcellularLocation>
        <location evidence="1">Membrane</location>
        <topology evidence="1">Multi-pass membrane protein</topology>
    </subcellularLocation>
</comment>
<comment type="similarity">
    <text evidence="1">Belongs to the aromatic-ring hydroxylase family. KMO subfamily.</text>
</comment>
<comment type="sequence caution" evidence="3">
    <conflict type="erroneous initiation">
        <sequence resource="EMBL-CDS" id="AAC47351"/>
    </conflict>
    <text>Extended N-terminus.</text>
</comment>
<comment type="sequence caution" evidence="3">
    <conflict type="erroneous initiation">
        <sequence resource="EMBL-CDS" id="AAK07882"/>
    </conflict>
    <text>Extended N-terminus.</text>
</comment>
<comment type="sequence caution" evidence="3">
    <conflict type="miscellaneous discrepancy">
        <sequence resource="EMBL-CDS" id="AAL48918"/>
    </conflict>
    <text>A mutation exists in the sequenced strain which affects the 3' end of the sequence.</text>
</comment>
<protein>
    <recommendedName>
        <fullName evidence="1">Kynurenine 3-monooxygenase</fullName>
        <ecNumber evidence="1">1.14.13.9</ecNumber>
    </recommendedName>
    <alternativeName>
        <fullName evidence="1">Kynurenine 3-hydroxylase</fullName>
    </alternativeName>
    <alternativeName>
        <fullName>Protein cinnabar</fullName>
    </alternativeName>
</protein>
<gene>
    <name evidence="1" type="primary">cn</name>
    <name type="ORF">CG1555</name>
</gene>
<organism>
    <name type="scientific">Drosophila melanogaster</name>
    <name type="common">Fruit fly</name>
    <dbReference type="NCBI Taxonomy" id="7227"/>
    <lineage>
        <taxon>Eukaryota</taxon>
        <taxon>Metazoa</taxon>
        <taxon>Ecdysozoa</taxon>
        <taxon>Arthropoda</taxon>
        <taxon>Hexapoda</taxon>
        <taxon>Insecta</taxon>
        <taxon>Pterygota</taxon>
        <taxon>Neoptera</taxon>
        <taxon>Endopterygota</taxon>
        <taxon>Diptera</taxon>
        <taxon>Brachycera</taxon>
        <taxon>Muscomorpha</taxon>
        <taxon>Ephydroidea</taxon>
        <taxon>Drosophilidae</taxon>
        <taxon>Drosophila</taxon>
        <taxon>Sophophora</taxon>
    </lineage>
</organism>
<name>KMO_DROME</name>
<proteinExistence type="evidence at transcript level"/>
<keyword id="KW-0274">FAD</keyword>
<keyword id="KW-0285">Flavoprotein</keyword>
<keyword id="KW-0472">Membrane</keyword>
<keyword id="KW-0496">Mitochondrion</keyword>
<keyword id="KW-0503">Monooxygenase</keyword>
<keyword id="KW-0521">NADP</keyword>
<keyword id="KW-0560">Oxidoreductase</keyword>
<keyword id="KW-0662">Pyridine nucleotide biosynthesis</keyword>
<keyword id="KW-1185">Reference proteome</keyword>
<keyword id="KW-0812">Transmembrane</keyword>
<keyword id="KW-1133">Transmembrane helix</keyword>